<organism>
    <name type="scientific">Saccharomyces cerevisiae (strain ATCC 204508 / S288c)</name>
    <name type="common">Baker's yeast</name>
    <dbReference type="NCBI Taxonomy" id="559292"/>
    <lineage>
        <taxon>Eukaryota</taxon>
        <taxon>Fungi</taxon>
        <taxon>Dikarya</taxon>
        <taxon>Ascomycota</taxon>
        <taxon>Saccharomycotina</taxon>
        <taxon>Saccharomycetes</taxon>
        <taxon>Saccharomycetales</taxon>
        <taxon>Saccharomycetaceae</taxon>
        <taxon>Saccharomyces</taxon>
    </lineage>
</organism>
<name>IOC3_YEAST</name>
<evidence type="ECO:0000256" key="1">
    <source>
        <dbReference type="SAM" id="MobiDB-lite"/>
    </source>
</evidence>
<evidence type="ECO:0000269" key="2">
    <source>
    </source>
</evidence>
<evidence type="ECO:0000269" key="3">
    <source>
    </source>
</evidence>
<evidence type="ECO:0000269" key="4">
    <source>
    </source>
</evidence>
<evidence type="ECO:0000269" key="5">
    <source>
    </source>
</evidence>
<evidence type="ECO:0007829" key="6">
    <source>
        <dbReference type="PDB" id="2Y9Y"/>
    </source>
</evidence>
<evidence type="ECO:0007829" key="7">
    <source>
        <dbReference type="PDB" id="7X3V"/>
    </source>
</evidence>
<keyword id="KW-0002">3D-structure</keyword>
<keyword id="KW-0539">Nucleus</keyword>
<keyword id="KW-1185">Reference proteome</keyword>
<keyword id="KW-0804">Transcription</keyword>
<keyword id="KW-0805">Transcription regulation</keyword>
<sequence length="787" mass="90897">MDSPSNSIQNLQQEAQGSSSAQLADHDHDRVSMAMPLQTDQSVSVSQSSDNLRRSRRVPKPRTSIYDEYEEELKERANKPKRKRPAPPKKKAPSTQNSKSNDKVEKKKTTSIAKDGKPTLKTNDKKVAPKPKPAHEQVEPALIPSNWTSVIPLLTSDFKNQYSVISRLKNPNMKPVPYAGDIIKLMAFINKFSSFFHSDLQNLSFQDFEVGLDLYPGDPNGSAAGIVKGPEDTSLLLYPDFMAIKDIVYCQDKMNLLFLSLLDLTFTENFDGKSAKKKGPLTTWENLKSSSKKVFSNPLYRLRLVAREWGYPREWRQQLPSDQDISKPKTALFEQDEQTPVVDPSHPEILTPNIYTWNANEPLPLESNPLYNREMDKNGILALKPMDRVVLLRALTDWCASHSSAIHDEIYKLTHGKKDPVFGIQTQQVPRYTIEGVDNTINQFKKLCSLIQSRYEIRSKKKHFVKQLKEGKKPDLSRKLEILKEIKAELKNAVKSEKDELLFSLYDKWVPLFEGELPDQPLANPFSERLYKLRLQEFFLGRVPHIGDFYMPRLHSYGDSLEMSTFTDLRNLQALLSKFKNNEYNAFTLFENDGQSMSAQFKLFYHDTPSLAHDVARGRNTSGKVYWYELCHDSATLLEFLEFLDYKIVKPQDEKKEGNEKEKEALNNEAHILEQKSTTDNNPSINTNPLPKDAKYNTARKKLQILKEFLSDYYFILRQFEQMKVQFADMKPGKRQLRRIQRQTVNYNTEYDSEEYVDDEEDDEADIYDDNDNDSSFDDGRVKRQRT</sequence>
<gene>
    <name type="primary">IOC3</name>
    <name type="ordered locus">YFR013W</name>
</gene>
<protein>
    <recommendedName>
        <fullName>ISWI one complex protein 3</fullName>
    </recommendedName>
</protein>
<reference key="1">
    <citation type="journal article" date="1995" name="Nat. Genet.">
        <title>Analysis of the nucleotide sequence of chromosome VI from Saccharomyces cerevisiae.</title>
        <authorList>
            <person name="Murakami Y."/>
            <person name="Naitou M."/>
            <person name="Hagiwara H."/>
            <person name="Shibata T."/>
            <person name="Ozawa M."/>
            <person name="Sasanuma S."/>
            <person name="Sasanuma M."/>
            <person name="Tsuchiya Y."/>
            <person name="Soeda E."/>
            <person name="Yokoyama K."/>
            <person name="Yamazaki M."/>
            <person name="Tashiro H."/>
            <person name="Eki T."/>
        </authorList>
    </citation>
    <scope>NUCLEOTIDE SEQUENCE [LARGE SCALE GENOMIC DNA]</scope>
    <source>
        <strain>ATCC 204508 / S288c</strain>
    </source>
</reference>
<reference key="2">
    <citation type="journal article" date="2014" name="G3 (Bethesda)">
        <title>The reference genome sequence of Saccharomyces cerevisiae: Then and now.</title>
        <authorList>
            <person name="Engel S.R."/>
            <person name="Dietrich F.S."/>
            <person name="Fisk D.G."/>
            <person name="Binkley G."/>
            <person name="Balakrishnan R."/>
            <person name="Costanzo M.C."/>
            <person name="Dwight S.S."/>
            <person name="Hitz B.C."/>
            <person name="Karra K."/>
            <person name="Nash R.S."/>
            <person name="Weng S."/>
            <person name="Wong E.D."/>
            <person name="Lloyd P."/>
            <person name="Skrzypek M.S."/>
            <person name="Miyasato S.R."/>
            <person name="Simison M."/>
            <person name="Cherry J.M."/>
        </authorList>
    </citation>
    <scope>GENOME REANNOTATION</scope>
    <source>
        <strain>ATCC 204508 / S288c</strain>
    </source>
</reference>
<reference key="3">
    <citation type="journal article" date="2003" name="Cell">
        <title>Isw1 chromatin remodeling ATPase coordinates transcription elongation and termination by RNA polymerase II.</title>
        <authorList>
            <person name="Morillon A."/>
            <person name="Karabetsou N."/>
            <person name="O'Sullivan J."/>
            <person name="Kent N."/>
            <person name="Proudfoot N."/>
            <person name="Mellor J."/>
        </authorList>
    </citation>
    <scope>FUNCTION OF THE ISW1A COMPLEX</scope>
</reference>
<reference key="4">
    <citation type="journal article" date="2003" name="Nature">
        <title>Global analysis of protein localization in budding yeast.</title>
        <authorList>
            <person name="Huh W.-K."/>
            <person name="Falvo J.V."/>
            <person name="Gerke L.C."/>
            <person name="Carroll A.S."/>
            <person name="Howson R.W."/>
            <person name="Weissman J.S."/>
            <person name="O'Shea E.K."/>
        </authorList>
    </citation>
    <scope>SUBCELLULAR LOCATION [LARGE SCALE ANALYSIS]</scope>
</reference>
<reference key="5">
    <citation type="journal article" date="2003" name="Nature">
        <title>Global analysis of protein expression in yeast.</title>
        <authorList>
            <person name="Ghaemmaghami S."/>
            <person name="Huh W.-K."/>
            <person name="Bower K."/>
            <person name="Howson R.W."/>
            <person name="Belle A."/>
            <person name="Dephoure N."/>
            <person name="O'Shea E.K."/>
            <person name="Weissman J.S."/>
        </authorList>
    </citation>
    <scope>LEVEL OF PROTEIN EXPRESSION [LARGE SCALE ANALYSIS]</scope>
</reference>
<reference key="6">
    <citation type="journal article" date="2003" name="Mol. Cell. Biol.">
        <title>Yeast Isw1p forms two separable complexes in vivo.</title>
        <authorList>
            <person name="Vary J.C. Jr."/>
            <person name="Gangaraju V.K."/>
            <person name="Qin J."/>
            <person name="Landel C.C."/>
            <person name="Kooperberg C."/>
            <person name="Bartholomew B."/>
            <person name="Tsukiyama T."/>
        </authorList>
    </citation>
    <scope>IDENTIFICATION IN THE ISW1A COMPLEX</scope>
    <scope>FUNCTION OF THE ISW1A COMPLEX</scope>
</reference>
<dbReference type="EMBL" id="D50617">
    <property type="protein sequence ID" value="BAA09252.1"/>
    <property type="molecule type" value="Genomic_DNA"/>
</dbReference>
<dbReference type="EMBL" id="BK006940">
    <property type="protein sequence ID" value="DAA12454.1"/>
    <property type="molecule type" value="Genomic_DNA"/>
</dbReference>
<dbReference type="PIR" id="S56268">
    <property type="entry name" value="S56268"/>
</dbReference>
<dbReference type="RefSeq" id="NP_116668.1">
    <property type="nucleotide sequence ID" value="NM_001179978.1"/>
</dbReference>
<dbReference type="PDB" id="2Y9Y">
    <property type="method" value="X-ray"/>
    <property type="resolution" value="3.25 A"/>
    <property type="chains" value="B=127-749"/>
</dbReference>
<dbReference type="PDB" id="2Y9Z">
    <property type="method" value="X-ray"/>
    <property type="resolution" value="3.60 A"/>
    <property type="chains" value="B=127-749"/>
</dbReference>
<dbReference type="PDB" id="7X3T">
    <property type="method" value="EM"/>
    <property type="resolution" value="5.40 A"/>
    <property type="chains" value="U=127-749"/>
</dbReference>
<dbReference type="PDB" id="7X3V">
    <property type="method" value="EM"/>
    <property type="resolution" value="3.09 A"/>
    <property type="chains" value="U=127-749"/>
</dbReference>
<dbReference type="PDBsum" id="2Y9Y"/>
<dbReference type="PDBsum" id="2Y9Z"/>
<dbReference type="PDBsum" id="7X3T"/>
<dbReference type="PDBsum" id="7X3V"/>
<dbReference type="EMDB" id="EMD-32992"/>
<dbReference type="EMDB" id="EMD-32994"/>
<dbReference type="SMR" id="P43596"/>
<dbReference type="BioGRID" id="31165">
    <property type="interactions" value="151"/>
</dbReference>
<dbReference type="ComplexPortal" id="CPX-637">
    <property type="entry name" value="ISW1a chromatin remodeling complex"/>
</dbReference>
<dbReference type="DIP" id="DIP-5446N"/>
<dbReference type="FunCoup" id="P43596">
    <property type="interactions" value="312"/>
</dbReference>
<dbReference type="IntAct" id="P43596">
    <property type="interactions" value="37"/>
</dbReference>
<dbReference type="MINT" id="P43596"/>
<dbReference type="STRING" id="4932.YFR013W"/>
<dbReference type="iPTMnet" id="P43596"/>
<dbReference type="PaxDb" id="4932-YFR013W"/>
<dbReference type="PeptideAtlas" id="P43596"/>
<dbReference type="EnsemblFungi" id="YFR013W_mRNA">
    <property type="protein sequence ID" value="YFR013W"/>
    <property type="gene ID" value="YFR013W"/>
</dbReference>
<dbReference type="GeneID" id="850567"/>
<dbReference type="KEGG" id="sce:YFR013W"/>
<dbReference type="AGR" id="SGD:S000001909"/>
<dbReference type="SGD" id="S000001909">
    <property type="gene designation" value="IOC3"/>
</dbReference>
<dbReference type="VEuPathDB" id="FungiDB:YFR013W"/>
<dbReference type="eggNOG" id="ENOG502QVSC">
    <property type="taxonomic scope" value="Eukaryota"/>
</dbReference>
<dbReference type="GeneTree" id="ENSGT00940000176416"/>
<dbReference type="HOGENOM" id="CLU_014696_0_0_1"/>
<dbReference type="InParanoid" id="P43596"/>
<dbReference type="OMA" id="YWYEMCH"/>
<dbReference type="OrthoDB" id="349045at2759"/>
<dbReference type="BioCyc" id="YEAST:G3O-30466-MONOMER"/>
<dbReference type="BioGRID-ORCS" id="850567">
    <property type="hits" value="3 hits in 10 CRISPR screens"/>
</dbReference>
<dbReference type="EvolutionaryTrace" id="P43596"/>
<dbReference type="PRO" id="PR:P43596"/>
<dbReference type="Proteomes" id="UP000002311">
    <property type="component" value="Chromosome VI"/>
</dbReference>
<dbReference type="RNAct" id="P43596">
    <property type="molecule type" value="protein"/>
</dbReference>
<dbReference type="GO" id="GO:0016587">
    <property type="term" value="C:Isw1 complex"/>
    <property type="evidence" value="ECO:0000353"/>
    <property type="project" value="ComplexPortal"/>
</dbReference>
<dbReference type="GO" id="GO:0036436">
    <property type="term" value="C:Isw1a complex"/>
    <property type="evidence" value="ECO:0000314"/>
    <property type="project" value="SGD"/>
</dbReference>
<dbReference type="GO" id="GO:0006338">
    <property type="term" value="P:chromatin remodeling"/>
    <property type="evidence" value="ECO:0000314"/>
    <property type="project" value="ComplexPortal"/>
</dbReference>
<dbReference type="GO" id="GO:0006355">
    <property type="term" value="P:regulation of DNA-templated transcription"/>
    <property type="evidence" value="ECO:0000303"/>
    <property type="project" value="ComplexPortal"/>
</dbReference>
<dbReference type="GO" id="GO:0007062">
    <property type="term" value="P:sister chromatid cohesion"/>
    <property type="evidence" value="ECO:0000315"/>
    <property type="project" value="SGD"/>
</dbReference>
<dbReference type="InterPro" id="IPR028942">
    <property type="entry name" value="WHIM1_dom"/>
</dbReference>
<dbReference type="Pfam" id="PF15612">
    <property type="entry name" value="WHIM1"/>
    <property type="match status" value="1"/>
</dbReference>
<comment type="function">
    <text evidence="2 5">Functions as a component of the ISW1A complex, which acts in remodeling the chromatin by catalyzing an ATP-dependent alteration in the structure of nucleosomal DNA. The ISW1A complex represses gene expression at initiation through specific positioning of a promoter proximal dinucleosome.</text>
</comment>
<comment type="subunit">
    <text evidence="2">Component of the ISW1A complex, which at least consists of ISW1 and IOC3.</text>
</comment>
<comment type="interaction">
    <interactant intactId="EBI-22944">
        <id>P43596</id>
    </interactant>
    <interactant intactId="EBI-21087">
        <id>P38144</id>
        <label>ISW1</label>
    </interactant>
    <organismsDiffer>false</organismsDiffer>
    <experiments>12</experiments>
</comment>
<comment type="subcellular location">
    <subcellularLocation>
        <location evidence="3">Nucleus</location>
    </subcellularLocation>
</comment>
<comment type="miscellaneous">
    <text evidence="4">Present with 1770 molecules/cell in log phase SD medium.</text>
</comment>
<accession>P43596</accession>
<accession>D6VTP4</accession>
<proteinExistence type="evidence at protein level"/>
<feature type="chain" id="PRO_0000202685" description="ISWI one complex protein 3">
    <location>
        <begin position="1"/>
        <end position="787"/>
    </location>
</feature>
<feature type="region of interest" description="Disordered" evidence="1">
    <location>
        <begin position="1"/>
        <end position="137"/>
    </location>
</feature>
<feature type="region of interest" description="Disordered" evidence="1">
    <location>
        <begin position="672"/>
        <end position="693"/>
    </location>
</feature>
<feature type="region of interest" description="Disordered" evidence="1">
    <location>
        <begin position="749"/>
        <end position="787"/>
    </location>
</feature>
<feature type="compositionally biased region" description="Polar residues" evidence="1">
    <location>
        <begin position="1"/>
        <end position="22"/>
    </location>
</feature>
<feature type="compositionally biased region" description="Low complexity" evidence="1">
    <location>
        <begin position="40"/>
        <end position="50"/>
    </location>
</feature>
<feature type="compositionally biased region" description="Basic residues" evidence="1">
    <location>
        <begin position="79"/>
        <end position="92"/>
    </location>
</feature>
<feature type="compositionally biased region" description="Basic and acidic residues" evidence="1">
    <location>
        <begin position="100"/>
        <end position="137"/>
    </location>
</feature>
<feature type="compositionally biased region" description="Polar residues" evidence="1">
    <location>
        <begin position="675"/>
        <end position="689"/>
    </location>
</feature>
<feature type="compositionally biased region" description="Acidic residues" evidence="1">
    <location>
        <begin position="751"/>
        <end position="777"/>
    </location>
</feature>
<feature type="compositionally biased region" description="Basic and acidic residues" evidence="1">
    <location>
        <begin position="778"/>
        <end position="787"/>
    </location>
</feature>
<feature type="turn" evidence="7">
    <location>
        <begin position="144"/>
        <end position="146"/>
    </location>
</feature>
<feature type="helix" evidence="6">
    <location>
        <begin position="157"/>
        <end position="159"/>
    </location>
</feature>
<feature type="helix" evidence="7">
    <location>
        <begin position="179"/>
        <end position="191"/>
    </location>
</feature>
<feature type="helix" evidence="7">
    <location>
        <begin position="193"/>
        <end position="195"/>
    </location>
</feature>
<feature type="helix" evidence="7">
    <location>
        <begin position="198"/>
        <end position="201"/>
    </location>
</feature>
<feature type="helix" evidence="7">
    <location>
        <begin position="205"/>
        <end position="212"/>
    </location>
</feature>
<feature type="strand" evidence="6">
    <location>
        <begin position="219"/>
        <end position="222"/>
    </location>
</feature>
<feature type="strand" evidence="6">
    <location>
        <begin position="224"/>
        <end position="227"/>
    </location>
</feature>
<feature type="strand" evidence="7">
    <location>
        <begin position="229"/>
        <end position="231"/>
    </location>
</feature>
<feature type="helix" evidence="7">
    <location>
        <begin position="238"/>
        <end position="240"/>
    </location>
</feature>
<feature type="helix" evidence="7">
    <location>
        <begin position="244"/>
        <end position="266"/>
    </location>
</feature>
<feature type="helix" evidence="7">
    <location>
        <begin position="284"/>
        <end position="287"/>
    </location>
</feature>
<feature type="helix" evidence="7">
    <location>
        <begin position="296"/>
        <end position="309"/>
    </location>
</feature>
<feature type="helix" evidence="7">
    <location>
        <begin position="313"/>
        <end position="315"/>
    </location>
</feature>
<feature type="strand" evidence="7">
    <location>
        <begin position="326"/>
        <end position="328"/>
    </location>
</feature>
<feature type="turn" evidence="7">
    <location>
        <begin position="365"/>
        <end position="367"/>
    </location>
</feature>
<feature type="helix" evidence="7">
    <location>
        <begin position="369"/>
        <end position="371"/>
    </location>
</feature>
<feature type="helix" evidence="7">
    <location>
        <begin position="373"/>
        <end position="375"/>
    </location>
</feature>
<feature type="turn" evidence="7">
    <location>
        <begin position="376"/>
        <end position="378"/>
    </location>
</feature>
<feature type="helix" evidence="6">
    <location>
        <begin position="380"/>
        <end position="382"/>
    </location>
</feature>
<feature type="helix" evidence="7">
    <location>
        <begin position="385"/>
        <end position="402"/>
    </location>
</feature>
<feature type="helix" evidence="7">
    <location>
        <begin position="404"/>
        <end position="414"/>
    </location>
</feature>
<feature type="strand" evidence="7">
    <location>
        <begin position="415"/>
        <end position="417"/>
    </location>
</feature>
<feature type="helix" evidence="7">
    <location>
        <begin position="431"/>
        <end position="434"/>
    </location>
</feature>
<feature type="helix" evidence="7">
    <location>
        <begin position="437"/>
        <end position="459"/>
    </location>
</feature>
<feature type="helix" evidence="7">
    <location>
        <begin position="462"/>
        <end position="468"/>
    </location>
</feature>
<feature type="turn" evidence="7">
    <location>
        <begin position="469"/>
        <end position="471"/>
    </location>
</feature>
<feature type="helix" evidence="7">
    <location>
        <begin position="475"/>
        <end position="491"/>
    </location>
</feature>
<feature type="helix" evidence="7">
    <location>
        <begin position="495"/>
        <end position="509"/>
    </location>
</feature>
<feature type="turn" evidence="7">
    <location>
        <begin position="510"/>
        <end position="514"/>
    </location>
</feature>
<feature type="helix" evidence="7">
    <location>
        <begin position="525"/>
        <end position="527"/>
    </location>
</feature>
<feature type="turn" evidence="7">
    <location>
        <begin position="531"/>
        <end position="533"/>
    </location>
</feature>
<feature type="strand" evidence="7">
    <location>
        <begin position="538"/>
        <end position="543"/>
    </location>
</feature>
<feature type="turn" evidence="7">
    <location>
        <begin position="544"/>
        <end position="546"/>
    </location>
</feature>
<feature type="strand" evidence="7">
    <location>
        <begin position="547"/>
        <end position="550"/>
    </location>
</feature>
<feature type="strand" evidence="7">
    <location>
        <begin position="557"/>
        <end position="560"/>
    </location>
</feature>
<feature type="helix" evidence="7">
    <location>
        <begin position="569"/>
        <end position="580"/>
    </location>
</feature>
<feature type="helix" evidence="7">
    <location>
        <begin position="586"/>
        <end position="591"/>
    </location>
</feature>
<feature type="turn" evidence="7">
    <location>
        <begin position="592"/>
        <end position="596"/>
    </location>
</feature>
<feature type="strand" evidence="7">
    <location>
        <begin position="603"/>
        <end position="606"/>
    </location>
</feature>
<feature type="helix" evidence="7">
    <location>
        <begin position="608"/>
        <end position="617"/>
    </location>
</feature>
<feature type="strand" evidence="7">
    <location>
        <begin position="627"/>
        <end position="633"/>
    </location>
</feature>
<feature type="helix" evidence="7">
    <location>
        <begin position="634"/>
        <end position="648"/>
    </location>
</feature>
<feature type="helix" evidence="7">
    <location>
        <begin position="652"/>
        <end position="655"/>
    </location>
</feature>
<feature type="helix" evidence="7">
    <location>
        <begin position="682"/>
        <end position="685"/>
    </location>
</feature>
<feature type="strand" evidence="7">
    <location>
        <begin position="692"/>
        <end position="695"/>
    </location>
</feature>
<feature type="helix" evidence="7">
    <location>
        <begin position="696"/>
        <end position="726"/>
    </location>
</feature>
<feature type="strand" evidence="6">
    <location>
        <begin position="727"/>
        <end position="729"/>
    </location>
</feature>
<feature type="helix" evidence="7">
    <location>
        <begin position="733"/>
        <end position="742"/>
    </location>
</feature>